<proteinExistence type="inferred from homology"/>
<evidence type="ECO:0000255" key="1">
    <source>
        <dbReference type="HAMAP-Rule" id="MF_00095"/>
    </source>
</evidence>
<accession>Q3M3I0</accession>
<feature type="chain" id="PRO_1000007968" description="Sugar fermentation stimulation protein homolog">
    <location>
        <begin position="1"/>
        <end position="241"/>
    </location>
</feature>
<organism>
    <name type="scientific">Trichormus variabilis (strain ATCC 29413 / PCC 7937)</name>
    <name type="common">Anabaena variabilis</name>
    <dbReference type="NCBI Taxonomy" id="240292"/>
    <lineage>
        <taxon>Bacteria</taxon>
        <taxon>Bacillati</taxon>
        <taxon>Cyanobacteriota</taxon>
        <taxon>Cyanophyceae</taxon>
        <taxon>Nostocales</taxon>
        <taxon>Nostocaceae</taxon>
        <taxon>Trichormus</taxon>
    </lineage>
</organism>
<reference key="1">
    <citation type="journal article" date="2014" name="Stand. Genomic Sci.">
        <title>Complete genome sequence of Anabaena variabilis ATCC 29413.</title>
        <authorList>
            <person name="Thiel T."/>
            <person name="Pratte B.S."/>
            <person name="Zhong J."/>
            <person name="Goodwin L."/>
            <person name="Copeland A."/>
            <person name="Lucas S."/>
            <person name="Han C."/>
            <person name="Pitluck S."/>
            <person name="Land M.L."/>
            <person name="Kyrpides N.C."/>
            <person name="Woyke T."/>
        </authorList>
    </citation>
    <scope>NUCLEOTIDE SEQUENCE [LARGE SCALE GENOMIC DNA]</scope>
    <source>
        <strain>ATCC 29413 / PCC 7937</strain>
    </source>
</reference>
<comment type="similarity">
    <text evidence="1">Belongs to the SfsA family.</text>
</comment>
<gene>
    <name evidence="1" type="primary">sfsA</name>
    <name type="ordered locus">Ava_4859</name>
</gene>
<name>SFSA_TRIV2</name>
<sequence>MIDWLYSYPPLYPGILLKRYKRFFADVQLASGEVVTAHCPNTGPMTGVSTLGSVVQLSKSANPKRKLAYTLELIQVHDNEPTWVGVNTALPNQIVKLALAKYLFPELGSYNHIKSEVVYGVDKKSRVDFFLTGSDTERPIYLEVKNTTWAKGTLALFPDTETTRGQKHLRELMTLLPQTRSVMLYFINRGDCTEFAPGDSTDPIYGKLLREAIALGLEVLPCRFDVTPEGIRYLGLAKLVI</sequence>
<protein>
    <recommendedName>
        <fullName evidence="1">Sugar fermentation stimulation protein homolog</fullName>
    </recommendedName>
</protein>
<dbReference type="EMBL" id="CP000117">
    <property type="protein sequence ID" value="ABA24456.1"/>
    <property type="molecule type" value="Genomic_DNA"/>
</dbReference>
<dbReference type="SMR" id="Q3M3I0"/>
<dbReference type="STRING" id="240292.Ava_4859"/>
<dbReference type="KEGG" id="ava:Ava_4859"/>
<dbReference type="eggNOG" id="COG1489">
    <property type="taxonomic scope" value="Bacteria"/>
</dbReference>
<dbReference type="HOGENOM" id="CLU_052299_2_0_3"/>
<dbReference type="Proteomes" id="UP000002533">
    <property type="component" value="Chromosome"/>
</dbReference>
<dbReference type="GO" id="GO:0003677">
    <property type="term" value="F:DNA binding"/>
    <property type="evidence" value="ECO:0007669"/>
    <property type="project" value="InterPro"/>
</dbReference>
<dbReference type="CDD" id="cd22359">
    <property type="entry name" value="SfsA-like_bacterial"/>
    <property type="match status" value="1"/>
</dbReference>
<dbReference type="Gene3D" id="2.40.50.580">
    <property type="match status" value="1"/>
</dbReference>
<dbReference type="Gene3D" id="3.40.1350.60">
    <property type="match status" value="1"/>
</dbReference>
<dbReference type="HAMAP" id="MF_00095">
    <property type="entry name" value="SfsA"/>
    <property type="match status" value="1"/>
</dbReference>
<dbReference type="InterPro" id="IPR005224">
    <property type="entry name" value="SfsA"/>
</dbReference>
<dbReference type="InterPro" id="IPR040452">
    <property type="entry name" value="SfsA_C"/>
</dbReference>
<dbReference type="InterPro" id="IPR041465">
    <property type="entry name" value="SfsA_N"/>
</dbReference>
<dbReference type="NCBIfam" id="TIGR00230">
    <property type="entry name" value="sfsA"/>
    <property type="match status" value="1"/>
</dbReference>
<dbReference type="PANTHER" id="PTHR30545">
    <property type="entry name" value="SUGAR FERMENTATION STIMULATION PROTEIN A"/>
    <property type="match status" value="1"/>
</dbReference>
<dbReference type="PANTHER" id="PTHR30545:SF2">
    <property type="entry name" value="SUGAR FERMENTATION STIMULATION PROTEIN A"/>
    <property type="match status" value="1"/>
</dbReference>
<dbReference type="Pfam" id="PF03749">
    <property type="entry name" value="SfsA"/>
    <property type="match status" value="1"/>
</dbReference>
<dbReference type="Pfam" id="PF17746">
    <property type="entry name" value="SfsA_N"/>
    <property type="match status" value="1"/>
</dbReference>